<reference key="1">
    <citation type="journal article" date="2007" name="J. Bacteriol.">
        <title>The genome sequence of avian pathogenic Escherichia coli strain O1:K1:H7 shares strong similarities with human extraintestinal pathogenic E. coli genomes.</title>
        <authorList>
            <person name="Johnson T.J."/>
            <person name="Kariyawasam S."/>
            <person name="Wannemuehler Y."/>
            <person name="Mangiamele P."/>
            <person name="Johnson S.J."/>
            <person name="Doetkott C."/>
            <person name="Skyberg J.A."/>
            <person name="Lynne A.M."/>
            <person name="Johnson J.R."/>
            <person name="Nolan L.K."/>
        </authorList>
    </citation>
    <scope>NUCLEOTIDE SEQUENCE [LARGE SCALE GENOMIC DNA]</scope>
</reference>
<keyword id="KW-0028">Amino-acid biosynthesis</keyword>
<keyword id="KW-0057">Aromatic amino acid biosynthesis</keyword>
<keyword id="KW-0963">Cytoplasm</keyword>
<keyword id="KW-1185">Reference proteome</keyword>
<keyword id="KW-0808">Transferase</keyword>
<name>AROA_ECOK1</name>
<proteinExistence type="inferred from homology"/>
<comment type="function">
    <text evidence="1">Catalyzes the transfer of the enolpyruvyl moiety of phosphoenolpyruvate (PEP) to the 5-hydroxyl of shikimate-3-phosphate (S3P) to produce enolpyruvyl shikimate-3-phosphate and inorganic phosphate.</text>
</comment>
<comment type="catalytic activity">
    <reaction evidence="1">
        <text>3-phosphoshikimate + phosphoenolpyruvate = 5-O-(1-carboxyvinyl)-3-phosphoshikimate + phosphate</text>
        <dbReference type="Rhea" id="RHEA:21256"/>
        <dbReference type="ChEBI" id="CHEBI:43474"/>
        <dbReference type="ChEBI" id="CHEBI:57701"/>
        <dbReference type="ChEBI" id="CHEBI:58702"/>
        <dbReference type="ChEBI" id="CHEBI:145989"/>
        <dbReference type="EC" id="2.5.1.19"/>
    </reaction>
    <physiologicalReaction direction="left-to-right" evidence="1">
        <dbReference type="Rhea" id="RHEA:21257"/>
    </physiologicalReaction>
</comment>
<comment type="pathway">
    <text evidence="1">Metabolic intermediate biosynthesis; chorismate biosynthesis; chorismate from D-erythrose 4-phosphate and phosphoenolpyruvate: step 6/7.</text>
</comment>
<comment type="subunit">
    <text evidence="1">Monomer.</text>
</comment>
<comment type="subcellular location">
    <subcellularLocation>
        <location evidence="1">Cytoplasm</location>
    </subcellularLocation>
</comment>
<comment type="similarity">
    <text evidence="1">Belongs to the EPSP synthase family.</text>
</comment>
<accession>A1A9I5</accession>
<organism>
    <name type="scientific">Escherichia coli O1:K1 / APEC</name>
    <dbReference type="NCBI Taxonomy" id="405955"/>
    <lineage>
        <taxon>Bacteria</taxon>
        <taxon>Pseudomonadati</taxon>
        <taxon>Pseudomonadota</taxon>
        <taxon>Gammaproteobacteria</taxon>
        <taxon>Enterobacterales</taxon>
        <taxon>Enterobacteriaceae</taxon>
        <taxon>Escherichia</taxon>
    </lineage>
</organism>
<protein>
    <recommendedName>
        <fullName evidence="1">3-phosphoshikimate 1-carboxyvinyltransferase</fullName>
        <ecNumber evidence="1">2.5.1.19</ecNumber>
    </recommendedName>
    <alternativeName>
        <fullName evidence="1">5-enolpyruvylshikimate-3-phosphate synthase</fullName>
        <shortName evidence="1">EPSP synthase</shortName>
        <shortName evidence="1">EPSPS</shortName>
    </alternativeName>
</protein>
<dbReference type="EC" id="2.5.1.19" evidence="1"/>
<dbReference type="EMBL" id="CP000468">
    <property type="protein sequence ID" value="ABJ00325.1"/>
    <property type="molecule type" value="Genomic_DNA"/>
</dbReference>
<dbReference type="RefSeq" id="WP_000445244.1">
    <property type="nucleotide sequence ID" value="NZ_CADILS010000016.1"/>
</dbReference>
<dbReference type="BMRB" id="A1A9I5"/>
<dbReference type="SMR" id="A1A9I5"/>
<dbReference type="KEGG" id="ecv:APECO1_20"/>
<dbReference type="HOGENOM" id="CLU_024321_0_0_6"/>
<dbReference type="UniPathway" id="UPA00053">
    <property type="reaction ID" value="UER00089"/>
</dbReference>
<dbReference type="Proteomes" id="UP000008216">
    <property type="component" value="Chromosome"/>
</dbReference>
<dbReference type="GO" id="GO:0005737">
    <property type="term" value="C:cytoplasm"/>
    <property type="evidence" value="ECO:0007669"/>
    <property type="project" value="UniProtKB-SubCell"/>
</dbReference>
<dbReference type="GO" id="GO:0003866">
    <property type="term" value="F:3-phosphoshikimate 1-carboxyvinyltransferase activity"/>
    <property type="evidence" value="ECO:0007669"/>
    <property type="project" value="UniProtKB-UniRule"/>
</dbReference>
<dbReference type="GO" id="GO:0008652">
    <property type="term" value="P:amino acid biosynthetic process"/>
    <property type="evidence" value="ECO:0007669"/>
    <property type="project" value="UniProtKB-KW"/>
</dbReference>
<dbReference type="GO" id="GO:0009073">
    <property type="term" value="P:aromatic amino acid family biosynthetic process"/>
    <property type="evidence" value="ECO:0007669"/>
    <property type="project" value="UniProtKB-KW"/>
</dbReference>
<dbReference type="GO" id="GO:0009423">
    <property type="term" value="P:chorismate biosynthetic process"/>
    <property type="evidence" value="ECO:0007669"/>
    <property type="project" value="UniProtKB-UniRule"/>
</dbReference>
<dbReference type="CDD" id="cd01554">
    <property type="entry name" value="EPT-like"/>
    <property type="match status" value="1"/>
</dbReference>
<dbReference type="FunFam" id="3.65.10.10:FF:000003">
    <property type="entry name" value="3-phosphoshikimate 1-carboxyvinyltransferase"/>
    <property type="match status" value="1"/>
</dbReference>
<dbReference type="FunFam" id="3.65.10.10:FF:000004">
    <property type="entry name" value="3-phosphoshikimate 1-carboxyvinyltransferase"/>
    <property type="match status" value="1"/>
</dbReference>
<dbReference type="Gene3D" id="3.65.10.10">
    <property type="entry name" value="Enolpyruvate transferase domain"/>
    <property type="match status" value="2"/>
</dbReference>
<dbReference type="HAMAP" id="MF_00210">
    <property type="entry name" value="EPSP_synth"/>
    <property type="match status" value="1"/>
</dbReference>
<dbReference type="InterPro" id="IPR001986">
    <property type="entry name" value="Enolpyruvate_Tfrase_dom"/>
</dbReference>
<dbReference type="InterPro" id="IPR036968">
    <property type="entry name" value="Enolpyruvate_Tfrase_sf"/>
</dbReference>
<dbReference type="InterPro" id="IPR006264">
    <property type="entry name" value="EPSP_synthase"/>
</dbReference>
<dbReference type="InterPro" id="IPR023193">
    <property type="entry name" value="EPSP_synthase_CS"/>
</dbReference>
<dbReference type="InterPro" id="IPR013792">
    <property type="entry name" value="RNA3'P_cycl/enolpyr_Trfase_a/b"/>
</dbReference>
<dbReference type="NCBIfam" id="TIGR01356">
    <property type="entry name" value="aroA"/>
    <property type="match status" value="1"/>
</dbReference>
<dbReference type="PANTHER" id="PTHR21090">
    <property type="entry name" value="AROM/DEHYDROQUINATE SYNTHASE"/>
    <property type="match status" value="1"/>
</dbReference>
<dbReference type="PANTHER" id="PTHR21090:SF5">
    <property type="entry name" value="PENTAFUNCTIONAL AROM POLYPEPTIDE"/>
    <property type="match status" value="1"/>
</dbReference>
<dbReference type="Pfam" id="PF00275">
    <property type="entry name" value="EPSP_synthase"/>
    <property type="match status" value="1"/>
</dbReference>
<dbReference type="PIRSF" id="PIRSF000505">
    <property type="entry name" value="EPSPS"/>
    <property type="match status" value="1"/>
</dbReference>
<dbReference type="SUPFAM" id="SSF55205">
    <property type="entry name" value="EPT/RTPC-like"/>
    <property type="match status" value="1"/>
</dbReference>
<dbReference type="PROSITE" id="PS00104">
    <property type="entry name" value="EPSP_SYNTHASE_1"/>
    <property type="match status" value="1"/>
</dbReference>
<dbReference type="PROSITE" id="PS00885">
    <property type="entry name" value="EPSP_SYNTHASE_2"/>
    <property type="match status" value="1"/>
</dbReference>
<feature type="chain" id="PRO_1000012430" description="3-phosphoshikimate 1-carboxyvinyltransferase">
    <location>
        <begin position="1"/>
        <end position="427"/>
    </location>
</feature>
<feature type="active site" description="Proton acceptor" evidence="1">
    <location>
        <position position="313"/>
    </location>
</feature>
<feature type="binding site" evidence="1">
    <location>
        <position position="22"/>
    </location>
    <ligand>
        <name>3-phosphoshikimate</name>
        <dbReference type="ChEBI" id="CHEBI:145989"/>
    </ligand>
</feature>
<feature type="binding site" evidence="1">
    <location>
        <position position="22"/>
    </location>
    <ligand>
        <name>phosphoenolpyruvate</name>
        <dbReference type="ChEBI" id="CHEBI:58702"/>
    </ligand>
</feature>
<feature type="binding site" evidence="1">
    <location>
        <position position="23"/>
    </location>
    <ligand>
        <name>3-phosphoshikimate</name>
        <dbReference type="ChEBI" id="CHEBI:145989"/>
    </ligand>
</feature>
<feature type="binding site" evidence="1">
    <location>
        <position position="27"/>
    </location>
    <ligand>
        <name>3-phosphoshikimate</name>
        <dbReference type="ChEBI" id="CHEBI:145989"/>
    </ligand>
</feature>
<feature type="binding site" evidence="1">
    <location>
        <position position="96"/>
    </location>
    <ligand>
        <name>phosphoenolpyruvate</name>
        <dbReference type="ChEBI" id="CHEBI:58702"/>
    </ligand>
</feature>
<feature type="binding site" evidence="1">
    <location>
        <position position="124"/>
    </location>
    <ligand>
        <name>phosphoenolpyruvate</name>
        <dbReference type="ChEBI" id="CHEBI:58702"/>
    </ligand>
</feature>
<feature type="binding site" evidence="1">
    <location>
        <position position="169"/>
    </location>
    <ligand>
        <name>3-phosphoshikimate</name>
        <dbReference type="ChEBI" id="CHEBI:145989"/>
    </ligand>
</feature>
<feature type="binding site" evidence="1">
    <location>
        <position position="170"/>
    </location>
    <ligand>
        <name>3-phosphoshikimate</name>
        <dbReference type="ChEBI" id="CHEBI:145989"/>
    </ligand>
</feature>
<feature type="binding site" evidence="1">
    <location>
        <position position="171"/>
    </location>
    <ligand>
        <name>3-phosphoshikimate</name>
        <dbReference type="ChEBI" id="CHEBI:145989"/>
    </ligand>
</feature>
<feature type="binding site" evidence="1">
    <location>
        <position position="171"/>
    </location>
    <ligand>
        <name>phosphoenolpyruvate</name>
        <dbReference type="ChEBI" id="CHEBI:58702"/>
    </ligand>
</feature>
<feature type="binding site" evidence="1">
    <location>
        <position position="197"/>
    </location>
    <ligand>
        <name>3-phosphoshikimate</name>
        <dbReference type="ChEBI" id="CHEBI:145989"/>
    </ligand>
</feature>
<feature type="binding site" evidence="1">
    <location>
        <position position="313"/>
    </location>
    <ligand>
        <name>3-phosphoshikimate</name>
        <dbReference type="ChEBI" id="CHEBI:145989"/>
    </ligand>
</feature>
<feature type="binding site" evidence="1">
    <location>
        <position position="336"/>
    </location>
    <ligand>
        <name>3-phosphoshikimate</name>
        <dbReference type="ChEBI" id="CHEBI:145989"/>
    </ligand>
</feature>
<feature type="binding site" evidence="1">
    <location>
        <position position="340"/>
    </location>
    <ligand>
        <name>3-phosphoshikimate</name>
        <dbReference type="ChEBI" id="CHEBI:145989"/>
    </ligand>
</feature>
<feature type="binding site" evidence="1">
    <location>
        <position position="344"/>
    </location>
    <ligand>
        <name>phosphoenolpyruvate</name>
        <dbReference type="ChEBI" id="CHEBI:58702"/>
    </ligand>
</feature>
<feature type="binding site" evidence="1">
    <location>
        <position position="386"/>
    </location>
    <ligand>
        <name>phosphoenolpyruvate</name>
        <dbReference type="ChEBI" id="CHEBI:58702"/>
    </ligand>
</feature>
<feature type="binding site" evidence="1">
    <location>
        <position position="411"/>
    </location>
    <ligand>
        <name>phosphoenolpyruvate</name>
        <dbReference type="ChEBI" id="CHEBI:58702"/>
    </ligand>
</feature>
<sequence>MESLTLQPIARVDGTINLPGSKSVSNRALLLAALAHGKTVLTNLLDSDDVRHMLNALTALGVSYTLSADRTRCEIIGNGGPLHAESARELFLGNAGTAMRPLAAALCLGSNDIVLTGEPRMKERPIGHLVDALRQGGAKITYLEQENYPPLRLQGGFTGGNVDVDGSVSSQFLTALLMTAPLAPEDTVIRIKGDLVSKPYIDITLNLMKTFGVEIENQHYQQFVVKGGQSYQSPGTYLVEGDASSASYFLAAAAIRGGTVKVTGIGRNSMQGDIRFADVLEKMGATICWGDDYISCTRGELNAIDMDMNHIPDAAMTIATAALFAKGTTTLRNIYNWRVKETDRLFAMATELRKVGAEVEEGHDFIRITPPEKLKFAEIATYNDHRMAMCFSLVALSDTPVTILDPKCTAKTFPDYFEQLARISQPG</sequence>
<evidence type="ECO:0000255" key="1">
    <source>
        <dbReference type="HAMAP-Rule" id="MF_00210"/>
    </source>
</evidence>
<gene>
    <name evidence="1" type="primary">aroA</name>
    <name type="ordered locus">Ecok1_08310</name>
    <name type="ORF">APECO1_20</name>
</gene>